<feature type="signal peptide">
    <location>
        <begin position="1"/>
        <end position="21"/>
    </location>
</feature>
<feature type="propeptide" id="PRO_0000032101">
    <location>
        <begin position="22"/>
        <end position="37"/>
    </location>
</feature>
<feature type="chain" id="PRO_0000032102" description="2S seed storage protein 4 small subunit" evidence="1">
    <location>
        <begin position="38"/>
        <end position="72"/>
    </location>
</feature>
<feature type="propeptide" id="PRO_0000032103">
    <location>
        <begin position="73"/>
        <end position="88"/>
    </location>
</feature>
<feature type="chain" id="PRO_0000032104" description="2S seed storage protein 4 large subunit" evidence="1">
    <location>
        <begin position="89"/>
        <end position="166"/>
    </location>
</feature>
<keyword id="KW-1015">Disulfide bond</keyword>
<keyword id="KW-1185">Reference proteome</keyword>
<keyword id="KW-0708">Seed storage protein</keyword>
<keyword id="KW-0732">Signal</keyword>
<keyword id="KW-0758">Storage protein</keyword>
<organism>
    <name type="scientific">Arabidopsis thaliana</name>
    <name type="common">Mouse-ear cress</name>
    <dbReference type="NCBI Taxonomy" id="3702"/>
    <lineage>
        <taxon>Eukaryota</taxon>
        <taxon>Viridiplantae</taxon>
        <taxon>Streptophyta</taxon>
        <taxon>Embryophyta</taxon>
        <taxon>Tracheophyta</taxon>
        <taxon>Spermatophyta</taxon>
        <taxon>Magnoliopsida</taxon>
        <taxon>eudicotyledons</taxon>
        <taxon>Gunneridae</taxon>
        <taxon>Pentapetalae</taxon>
        <taxon>rosids</taxon>
        <taxon>malvids</taxon>
        <taxon>Brassicales</taxon>
        <taxon>Brassicaceae</taxon>
        <taxon>Camelineae</taxon>
        <taxon>Arabidopsis</taxon>
    </lineage>
</organism>
<accession>P15460</accession>
<sequence length="166" mass="19169">MANKLFLVCAALALCFILTNASVYRTVVEFDEDDASNPIGPIQKCQKEFQQDQHLRACQRWMRKQMWQGRGGGPSLDDEFDMEDDIENPQRRQLLQKCCSELRQEEPVCVCPTLRQAAKAVRFQGQQHQPEQVRKIYQAAKYLPNICKIQQVGVCPFQIPSIPSYY</sequence>
<gene>
    <name type="primary">AT2S4</name>
    <name type="ordered locus">At4g27170</name>
    <name type="ORF">T24A18.120</name>
</gene>
<name>2SS4_ARATH</name>
<comment type="function">
    <text>This is a 2S seed storage protein.</text>
</comment>
<comment type="subunit">
    <text>The mature protein consists of a small and a large chain linked by disulfide bonds.</text>
</comment>
<comment type="similarity">
    <text evidence="2">Belongs to the 2S seed storage albumins family.</text>
</comment>
<reference key="1">
    <citation type="journal article" date="1988" name="Plant Physiol.">
        <title>Determination of the processing sites of an Arabidopsis 2S albumin and characterization of the complete gene family.</title>
        <authorList>
            <person name="Krebbers E."/>
            <person name="Herdies L."/>
            <person name="de Clercq A."/>
            <person name="Seurinck J."/>
            <person name="Leemans J."/>
            <person name="van Damme J."/>
            <person name="Segura M."/>
            <person name="Gheysen G."/>
            <person name="van Montagu M."/>
            <person name="Vandekerckhove J."/>
        </authorList>
    </citation>
    <scope>NUCLEOTIDE SEQUENCE [GENOMIC DNA]</scope>
    <source>
        <strain>cv. C24</strain>
    </source>
</reference>
<reference key="2">
    <citation type="journal article" date="1994" name="Plant J.">
        <title>A cotyledon regulatory region is responsible for the different spatial expression patterns of Arabidopsis 2S albumin genes.</title>
        <authorList>
            <person name="da Silva Conceicao A."/>
            <person name="Krebbers E."/>
        </authorList>
    </citation>
    <scope>NUCLEOTIDE SEQUENCE [GENOMIC DNA]</scope>
    <source>
        <strain>cv. C24</strain>
    </source>
</reference>
<reference key="3">
    <citation type="journal article" date="1999" name="Nature">
        <title>Sequence and analysis of chromosome 4 of the plant Arabidopsis thaliana.</title>
        <authorList>
            <person name="Mayer K.F.X."/>
            <person name="Schueller C."/>
            <person name="Wambutt R."/>
            <person name="Murphy G."/>
            <person name="Volckaert G."/>
            <person name="Pohl T."/>
            <person name="Duesterhoeft A."/>
            <person name="Stiekema W."/>
            <person name="Entian K.-D."/>
            <person name="Terryn N."/>
            <person name="Harris B."/>
            <person name="Ansorge W."/>
            <person name="Brandt P."/>
            <person name="Grivell L.A."/>
            <person name="Rieger M."/>
            <person name="Weichselgartner M."/>
            <person name="de Simone V."/>
            <person name="Obermaier B."/>
            <person name="Mache R."/>
            <person name="Mueller M."/>
            <person name="Kreis M."/>
            <person name="Delseny M."/>
            <person name="Puigdomenech P."/>
            <person name="Watson M."/>
            <person name="Schmidtheini T."/>
            <person name="Reichert B."/>
            <person name="Portetelle D."/>
            <person name="Perez-Alonso M."/>
            <person name="Boutry M."/>
            <person name="Bancroft I."/>
            <person name="Vos P."/>
            <person name="Hoheisel J."/>
            <person name="Zimmermann W."/>
            <person name="Wedler H."/>
            <person name="Ridley P."/>
            <person name="Langham S.-A."/>
            <person name="McCullagh B."/>
            <person name="Bilham L."/>
            <person name="Robben J."/>
            <person name="van der Schueren J."/>
            <person name="Grymonprez B."/>
            <person name="Chuang Y.-J."/>
            <person name="Vandenbussche F."/>
            <person name="Braeken M."/>
            <person name="Weltjens I."/>
            <person name="Voet M."/>
            <person name="Bastiaens I."/>
            <person name="Aert R."/>
            <person name="Defoor E."/>
            <person name="Weitzenegger T."/>
            <person name="Bothe G."/>
            <person name="Ramsperger U."/>
            <person name="Hilbert H."/>
            <person name="Braun M."/>
            <person name="Holzer E."/>
            <person name="Brandt A."/>
            <person name="Peters S."/>
            <person name="van Staveren M."/>
            <person name="Dirkse W."/>
            <person name="Mooijman P."/>
            <person name="Klein Lankhorst R."/>
            <person name="Rose M."/>
            <person name="Hauf J."/>
            <person name="Koetter P."/>
            <person name="Berneiser S."/>
            <person name="Hempel S."/>
            <person name="Feldpausch M."/>
            <person name="Lamberth S."/>
            <person name="Van den Daele H."/>
            <person name="De Keyser A."/>
            <person name="Buysshaert C."/>
            <person name="Gielen J."/>
            <person name="Villarroel R."/>
            <person name="De Clercq R."/>
            <person name="van Montagu M."/>
            <person name="Rogers J."/>
            <person name="Cronin A."/>
            <person name="Quail M.A."/>
            <person name="Bray-Allen S."/>
            <person name="Clark L."/>
            <person name="Doggett J."/>
            <person name="Hall S."/>
            <person name="Kay M."/>
            <person name="Lennard N."/>
            <person name="McLay K."/>
            <person name="Mayes R."/>
            <person name="Pettett A."/>
            <person name="Rajandream M.A."/>
            <person name="Lyne M."/>
            <person name="Benes V."/>
            <person name="Rechmann S."/>
            <person name="Borkova D."/>
            <person name="Bloecker H."/>
            <person name="Scharfe M."/>
            <person name="Grimm M."/>
            <person name="Loehnert T.-H."/>
            <person name="Dose S."/>
            <person name="de Haan M."/>
            <person name="Maarse A.C."/>
            <person name="Schaefer M."/>
            <person name="Mueller-Auer S."/>
            <person name="Gabel C."/>
            <person name="Fuchs M."/>
            <person name="Fartmann B."/>
            <person name="Granderath K."/>
            <person name="Dauner D."/>
            <person name="Herzl A."/>
            <person name="Neumann S."/>
            <person name="Argiriou A."/>
            <person name="Vitale D."/>
            <person name="Liguori R."/>
            <person name="Piravandi E."/>
            <person name="Massenet O."/>
            <person name="Quigley F."/>
            <person name="Clabauld G."/>
            <person name="Muendlein A."/>
            <person name="Felber R."/>
            <person name="Schnabl S."/>
            <person name="Hiller R."/>
            <person name="Schmidt W."/>
            <person name="Lecharny A."/>
            <person name="Aubourg S."/>
            <person name="Chefdor F."/>
            <person name="Cooke R."/>
            <person name="Berger C."/>
            <person name="Monfort A."/>
            <person name="Casacuberta E."/>
            <person name="Gibbons T."/>
            <person name="Weber N."/>
            <person name="Vandenbol M."/>
            <person name="Bargues M."/>
            <person name="Terol J."/>
            <person name="Torres A."/>
            <person name="Perez-Perez A."/>
            <person name="Purnelle B."/>
            <person name="Bent E."/>
            <person name="Johnson S."/>
            <person name="Tacon D."/>
            <person name="Jesse T."/>
            <person name="Heijnen L."/>
            <person name="Schwarz S."/>
            <person name="Scholler P."/>
            <person name="Heber S."/>
            <person name="Francs P."/>
            <person name="Bielke C."/>
            <person name="Frishman D."/>
            <person name="Haase D."/>
            <person name="Lemcke K."/>
            <person name="Mewes H.-W."/>
            <person name="Stocker S."/>
            <person name="Zaccaria P."/>
            <person name="Bevan M."/>
            <person name="Wilson R.K."/>
            <person name="de la Bastide M."/>
            <person name="Habermann K."/>
            <person name="Parnell L."/>
            <person name="Dedhia N."/>
            <person name="Gnoj L."/>
            <person name="Schutz K."/>
            <person name="Huang E."/>
            <person name="Spiegel L."/>
            <person name="Sekhon M."/>
            <person name="Murray J."/>
            <person name="Sheet P."/>
            <person name="Cordes M."/>
            <person name="Abu-Threideh J."/>
            <person name="Stoneking T."/>
            <person name="Kalicki J."/>
            <person name="Graves T."/>
            <person name="Harmon G."/>
            <person name="Edwards J."/>
            <person name="Latreille P."/>
            <person name="Courtney L."/>
            <person name="Cloud J."/>
            <person name="Abbott A."/>
            <person name="Scott K."/>
            <person name="Johnson D."/>
            <person name="Minx P."/>
            <person name="Bentley D."/>
            <person name="Fulton B."/>
            <person name="Miller N."/>
            <person name="Greco T."/>
            <person name="Kemp K."/>
            <person name="Kramer J."/>
            <person name="Fulton L."/>
            <person name="Mardis E."/>
            <person name="Dante M."/>
            <person name="Pepin K."/>
            <person name="Hillier L.W."/>
            <person name="Nelson J."/>
            <person name="Spieth J."/>
            <person name="Ryan E."/>
            <person name="Andrews S."/>
            <person name="Geisel C."/>
            <person name="Layman D."/>
            <person name="Du H."/>
            <person name="Ali J."/>
            <person name="Berghoff A."/>
            <person name="Jones K."/>
            <person name="Drone K."/>
            <person name="Cotton M."/>
            <person name="Joshu C."/>
            <person name="Antonoiu B."/>
            <person name="Zidanic M."/>
            <person name="Strong C."/>
            <person name="Sun H."/>
            <person name="Lamar B."/>
            <person name="Yordan C."/>
            <person name="Ma P."/>
            <person name="Zhong J."/>
            <person name="Preston R."/>
            <person name="Vil D."/>
            <person name="Shekher M."/>
            <person name="Matero A."/>
            <person name="Shah R."/>
            <person name="Swaby I.K."/>
            <person name="O'Shaughnessy A."/>
            <person name="Rodriguez M."/>
            <person name="Hoffman J."/>
            <person name="Till S."/>
            <person name="Granat S."/>
            <person name="Shohdy N."/>
            <person name="Hasegawa A."/>
            <person name="Hameed A."/>
            <person name="Lodhi M."/>
            <person name="Johnson A."/>
            <person name="Chen E."/>
            <person name="Marra M.A."/>
            <person name="Martienssen R."/>
            <person name="McCombie W.R."/>
        </authorList>
    </citation>
    <scope>NUCLEOTIDE SEQUENCE [LARGE SCALE GENOMIC DNA]</scope>
    <source>
        <strain>cv. Columbia</strain>
    </source>
</reference>
<reference key="4">
    <citation type="journal article" date="2017" name="Plant J.">
        <title>Araport11: a complete reannotation of the Arabidopsis thaliana reference genome.</title>
        <authorList>
            <person name="Cheng C.Y."/>
            <person name="Krishnakumar V."/>
            <person name="Chan A.P."/>
            <person name="Thibaud-Nissen F."/>
            <person name="Schobel S."/>
            <person name="Town C.D."/>
        </authorList>
    </citation>
    <scope>GENOME REANNOTATION</scope>
    <source>
        <strain>cv. Columbia</strain>
    </source>
</reference>
<reference key="5">
    <citation type="journal article" date="2003" name="Science">
        <title>Empirical analysis of transcriptional activity in the Arabidopsis genome.</title>
        <authorList>
            <person name="Yamada K."/>
            <person name="Lim J."/>
            <person name="Dale J.M."/>
            <person name="Chen H."/>
            <person name="Shinn P."/>
            <person name="Palm C.J."/>
            <person name="Southwick A.M."/>
            <person name="Wu H.C."/>
            <person name="Kim C.J."/>
            <person name="Nguyen M."/>
            <person name="Pham P.K."/>
            <person name="Cheuk R.F."/>
            <person name="Karlin-Newmann G."/>
            <person name="Liu S.X."/>
            <person name="Lam B."/>
            <person name="Sakano H."/>
            <person name="Wu T."/>
            <person name="Yu G."/>
            <person name="Miranda M."/>
            <person name="Quach H.L."/>
            <person name="Tripp M."/>
            <person name="Chang C.H."/>
            <person name="Lee J.M."/>
            <person name="Toriumi M.J."/>
            <person name="Chan M.M."/>
            <person name="Tang C.C."/>
            <person name="Onodera C.S."/>
            <person name="Deng J.M."/>
            <person name="Akiyama K."/>
            <person name="Ansari Y."/>
            <person name="Arakawa T."/>
            <person name="Banh J."/>
            <person name="Banno F."/>
            <person name="Bowser L."/>
            <person name="Brooks S.Y."/>
            <person name="Carninci P."/>
            <person name="Chao Q."/>
            <person name="Choy N."/>
            <person name="Enju A."/>
            <person name="Goldsmith A.D."/>
            <person name="Gurjal M."/>
            <person name="Hansen N.F."/>
            <person name="Hayashizaki Y."/>
            <person name="Johnson-Hopson C."/>
            <person name="Hsuan V.W."/>
            <person name="Iida K."/>
            <person name="Karnes M."/>
            <person name="Khan S."/>
            <person name="Koesema E."/>
            <person name="Ishida J."/>
            <person name="Jiang P.X."/>
            <person name="Jones T."/>
            <person name="Kawai J."/>
            <person name="Kamiya A."/>
            <person name="Meyers C."/>
            <person name="Nakajima M."/>
            <person name="Narusaka M."/>
            <person name="Seki M."/>
            <person name="Sakurai T."/>
            <person name="Satou M."/>
            <person name="Tamse R."/>
            <person name="Vaysberg M."/>
            <person name="Wallender E.K."/>
            <person name="Wong C."/>
            <person name="Yamamura Y."/>
            <person name="Yuan S."/>
            <person name="Shinozaki K."/>
            <person name="Davis R.W."/>
            <person name="Theologis A."/>
            <person name="Ecker J.R."/>
        </authorList>
    </citation>
    <scope>NUCLEOTIDE SEQUENCE [LARGE SCALE MRNA]</scope>
    <source>
        <strain>cv. Columbia</strain>
    </source>
</reference>
<reference key="6">
    <citation type="journal article" date="1993" name="Plant J.">
        <title>An inventory of 1152 expressed sequence tags obtained by partial sequencing of cDNAs from Arabidopsis thaliana.</title>
        <authorList>
            <person name="Hoefte H."/>
            <person name="Desprez T."/>
            <person name="Amselem J."/>
            <person name="Chiapello H."/>
            <person name="Rouze P."/>
            <person name="Caboche M."/>
            <person name="Moisan A."/>
            <person name="Jourjon M.-F."/>
            <person name="Charpenteau J.-L."/>
            <person name="Berthomieu P."/>
            <person name="Guerrier D."/>
            <person name="Giraudat J."/>
            <person name="Quigley F."/>
            <person name="Thomas F."/>
            <person name="Yu D.-Y."/>
            <person name="Mache R."/>
            <person name="Raynal M."/>
            <person name="Cooke R."/>
            <person name="Grellet F."/>
            <person name="Delseny M."/>
            <person name="Parmentier Y."/>
            <person name="de Marcillac G."/>
            <person name="Gigot C."/>
            <person name="Fleck J."/>
            <person name="Philipps G."/>
            <person name="Axelos M."/>
            <person name="Bardet C."/>
            <person name="Tremousaygue D."/>
            <person name="Lescure B."/>
        </authorList>
    </citation>
    <scope>NUCLEOTIDE SEQUENCE [LARGE SCALE MRNA]</scope>
    <source>
        <strain>cv. Columbia</strain>
        <tissue>Green siliques</tissue>
    </source>
</reference>
<proteinExistence type="evidence at transcript level"/>
<evidence type="ECO:0000250" key="1"/>
<evidence type="ECO:0000305" key="2"/>
<dbReference type="EMBL" id="AH001334">
    <property type="protein sequence ID" value="AAA32746.1"/>
    <property type="molecule type" value="Genomic_DNA"/>
</dbReference>
<dbReference type="EMBL" id="Z24744">
    <property type="protein sequence ID" value="CAA80869.1"/>
    <property type="molecule type" value="Genomic_DNA"/>
</dbReference>
<dbReference type="EMBL" id="AL035680">
    <property type="protein sequence ID" value="CAB38847.1"/>
    <property type="molecule type" value="Genomic_DNA"/>
</dbReference>
<dbReference type="EMBL" id="AL161566">
    <property type="protein sequence ID" value="CAB79572.1"/>
    <property type="molecule type" value="Genomic_DNA"/>
</dbReference>
<dbReference type="EMBL" id="CP002687">
    <property type="protein sequence ID" value="AEE85309.1"/>
    <property type="molecule type" value="Genomic_DNA"/>
</dbReference>
<dbReference type="EMBL" id="AF446894">
    <property type="protein sequence ID" value="AAL38627.1"/>
    <property type="molecule type" value="mRNA"/>
</dbReference>
<dbReference type="EMBL" id="AY052682">
    <property type="protein sequence ID" value="AAK96586.1"/>
    <property type="molecule type" value="mRNA"/>
</dbReference>
<dbReference type="EMBL" id="Z17597">
    <property type="protein sequence ID" value="CAA79009.1"/>
    <property type="molecule type" value="mRNA"/>
</dbReference>
<dbReference type="EMBL" id="Z17601">
    <property type="protein sequence ID" value="CAA79011.1"/>
    <property type="molecule type" value="mRNA"/>
</dbReference>
<dbReference type="PIR" id="JA0164">
    <property type="entry name" value="NWMU4"/>
</dbReference>
<dbReference type="RefSeq" id="NP_194447.1">
    <property type="nucleotide sequence ID" value="NM_118851.1"/>
</dbReference>
<dbReference type="SMR" id="P15460"/>
<dbReference type="BioGRID" id="14112">
    <property type="interactions" value="1"/>
</dbReference>
<dbReference type="FunCoup" id="P15460">
    <property type="interactions" value="85"/>
</dbReference>
<dbReference type="STRING" id="3702.P15460"/>
<dbReference type="PaxDb" id="3702-AT4G27170.1"/>
<dbReference type="ProteomicsDB" id="245162"/>
<dbReference type="EnsemblPlants" id="AT4G27170.1">
    <property type="protein sequence ID" value="AT4G27170.1"/>
    <property type="gene ID" value="AT4G27170"/>
</dbReference>
<dbReference type="GeneID" id="828825"/>
<dbReference type="Gramene" id="AT4G27170.1">
    <property type="protein sequence ID" value="AT4G27170.1"/>
    <property type="gene ID" value="AT4G27170"/>
</dbReference>
<dbReference type="KEGG" id="ath:AT4G27170"/>
<dbReference type="Araport" id="AT4G27170"/>
<dbReference type="TAIR" id="AT4G27170">
    <property type="gene designation" value="SESA4"/>
</dbReference>
<dbReference type="eggNOG" id="ENOG502S7EV">
    <property type="taxonomic scope" value="Eukaryota"/>
</dbReference>
<dbReference type="HOGENOM" id="CLU_131213_1_0_1"/>
<dbReference type="InParanoid" id="P15460"/>
<dbReference type="OMA" id="MKMMVED"/>
<dbReference type="PhylomeDB" id="P15460"/>
<dbReference type="PRO" id="PR:P15460"/>
<dbReference type="Proteomes" id="UP000006548">
    <property type="component" value="Chromosome 4"/>
</dbReference>
<dbReference type="ExpressionAtlas" id="P15460">
    <property type="expression patterns" value="baseline and differential"/>
</dbReference>
<dbReference type="GO" id="GO:0045735">
    <property type="term" value="F:nutrient reservoir activity"/>
    <property type="evidence" value="ECO:0007669"/>
    <property type="project" value="UniProtKB-KW"/>
</dbReference>
<dbReference type="CDD" id="cd00261">
    <property type="entry name" value="AAI_SS"/>
    <property type="match status" value="1"/>
</dbReference>
<dbReference type="Gene3D" id="1.10.110.10">
    <property type="entry name" value="Plant lipid-transfer and hydrophobic proteins"/>
    <property type="match status" value="1"/>
</dbReference>
<dbReference type="InterPro" id="IPR036312">
    <property type="entry name" value="Bifun_inhib/LTP/seed_sf"/>
</dbReference>
<dbReference type="InterPro" id="IPR016140">
    <property type="entry name" value="Bifunc_inhib/LTP/seed_store"/>
</dbReference>
<dbReference type="InterPro" id="IPR000617">
    <property type="entry name" value="Napin/2SS/CON"/>
</dbReference>
<dbReference type="PANTHER" id="PTHR35496">
    <property type="entry name" value="2S SEED STORAGE PROTEIN 1-RELATED"/>
    <property type="match status" value="1"/>
</dbReference>
<dbReference type="PANTHER" id="PTHR35496:SF20">
    <property type="entry name" value="2S SEED STORAGE PROTEIN 1-RELATED"/>
    <property type="match status" value="1"/>
</dbReference>
<dbReference type="Pfam" id="PF00234">
    <property type="entry name" value="Tryp_alpha_amyl"/>
    <property type="match status" value="1"/>
</dbReference>
<dbReference type="PRINTS" id="PR00496">
    <property type="entry name" value="NAPIN"/>
</dbReference>
<dbReference type="SMART" id="SM00499">
    <property type="entry name" value="AAI"/>
    <property type="match status" value="1"/>
</dbReference>
<dbReference type="SUPFAM" id="SSF47699">
    <property type="entry name" value="Bifunctional inhibitor/lipid-transfer protein/seed storage 2S albumin"/>
    <property type="match status" value="1"/>
</dbReference>
<protein>
    <recommendedName>
        <fullName>2S seed storage protein 4</fullName>
    </recommendedName>
    <alternativeName>
        <fullName>2S albumin storage protein</fullName>
    </alternativeName>
    <alternativeName>
        <fullName>NWMU2-2S albumin 4</fullName>
    </alternativeName>
    <component>
        <recommendedName>
            <fullName>2S seed storage protein 4 small subunit</fullName>
        </recommendedName>
    </component>
    <component>
        <recommendedName>
            <fullName>2S seed storage protein 4 large subunit</fullName>
        </recommendedName>
    </component>
</protein>